<protein>
    <recommendedName>
        <fullName evidence="1">Protein-L-isoaspartate O-methyltransferase</fullName>
        <ecNumber evidence="1">2.1.1.77</ecNumber>
    </recommendedName>
    <alternativeName>
        <fullName evidence="1">L-isoaspartyl protein carboxyl methyltransferase</fullName>
    </alternativeName>
    <alternativeName>
        <fullName evidence="1">Protein L-isoaspartyl methyltransferase</fullName>
    </alternativeName>
    <alternativeName>
        <fullName evidence="1">Protein-beta-aspartate methyltransferase</fullName>
        <shortName evidence="1">PIMT</shortName>
    </alternativeName>
</protein>
<sequence>MEDSYLHKGLRRKLIKILRDKGIQDELVLQAIDRVPRHIFLDNAFLEHAYQDKAFPIGDGQTISQPYTVASQTSLLKLSPGMKVLEIGTGSGYQCSVLLEMGVNVFTIEYHKSLFEKSKKMLQSLGYKAQFFCGDGSEGLARFGPYDRILATAGAPYVPQKLLEQLKVGGILVIPVGDQKTQKMLRLTKVTEKEITQEECGDFRFVPLVGKDGWNAKTNKL</sequence>
<name>PIMT_CYTH3</name>
<reference key="1">
    <citation type="journal article" date="2007" name="Appl. Environ. Microbiol.">
        <title>Genome sequence of the cellulolytic gliding bacterium Cytophaga hutchinsonii.</title>
        <authorList>
            <person name="Xie G."/>
            <person name="Bruce D.C."/>
            <person name="Challacombe J.F."/>
            <person name="Chertkov O."/>
            <person name="Detter J.C."/>
            <person name="Gilna P."/>
            <person name="Han C.S."/>
            <person name="Lucas S."/>
            <person name="Misra M."/>
            <person name="Myers G.L."/>
            <person name="Richardson P."/>
            <person name="Tapia R."/>
            <person name="Thayer N."/>
            <person name="Thompson L.S."/>
            <person name="Brettin T.S."/>
            <person name="Henrissat B."/>
            <person name="Wilson D.B."/>
            <person name="McBride M.J."/>
        </authorList>
    </citation>
    <scope>NUCLEOTIDE SEQUENCE [LARGE SCALE GENOMIC DNA]</scope>
    <source>
        <strain>ATCC 33406 / DSM 1761 / JCM 20678 / CIP 103989 / IAM 12607 / NBRC 15051 / NCIMB 9469 / D465</strain>
    </source>
</reference>
<dbReference type="EC" id="2.1.1.77" evidence="1"/>
<dbReference type="EMBL" id="CP000383">
    <property type="protein sequence ID" value="ABG59194.1"/>
    <property type="molecule type" value="Genomic_DNA"/>
</dbReference>
<dbReference type="RefSeq" id="WP_011585311.1">
    <property type="nucleotide sequence ID" value="NC_008255.1"/>
</dbReference>
<dbReference type="SMR" id="Q11TS0"/>
<dbReference type="STRING" id="269798.CHU_1928"/>
<dbReference type="KEGG" id="chu:CHU_1928"/>
<dbReference type="eggNOG" id="COG2518">
    <property type="taxonomic scope" value="Bacteria"/>
</dbReference>
<dbReference type="HOGENOM" id="CLU_055432_2_0_10"/>
<dbReference type="OrthoDB" id="9810066at2"/>
<dbReference type="Proteomes" id="UP000001822">
    <property type="component" value="Chromosome"/>
</dbReference>
<dbReference type="GO" id="GO:0005737">
    <property type="term" value="C:cytoplasm"/>
    <property type="evidence" value="ECO:0007669"/>
    <property type="project" value="UniProtKB-SubCell"/>
</dbReference>
<dbReference type="GO" id="GO:0004719">
    <property type="term" value="F:protein-L-isoaspartate (D-aspartate) O-methyltransferase activity"/>
    <property type="evidence" value="ECO:0007669"/>
    <property type="project" value="UniProtKB-UniRule"/>
</dbReference>
<dbReference type="GO" id="GO:0032259">
    <property type="term" value="P:methylation"/>
    <property type="evidence" value="ECO:0007669"/>
    <property type="project" value="UniProtKB-KW"/>
</dbReference>
<dbReference type="GO" id="GO:0036211">
    <property type="term" value="P:protein modification process"/>
    <property type="evidence" value="ECO:0007669"/>
    <property type="project" value="UniProtKB-UniRule"/>
</dbReference>
<dbReference type="GO" id="GO:0030091">
    <property type="term" value="P:protein repair"/>
    <property type="evidence" value="ECO:0007669"/>
    <property type="project" value="UniProtKB-UniRule"/>
</dbReference>
<dbReference type="CDD" id="cd02440">
    <property type="entry name" value="AdoMet_MTases"/>
    <property type="match status" value="1"/>
</dbReference>
<dbReference type="FunFam" id="3.40.50.150:FF:000010">
    <property type="entry name" value="Protein-L-isoaspartate O-methyltransferase"/>
    <property type="match status" value="1"/>
</dbReference>
<dbReference type="Gene3D" id="3.40.50.150">
    <property type="entry name" value="Vaccinia Virus protein VP39"/>
    <property type="match status" value="1"/>
</dbReference>
<dbReference type="HAMAP" id="MF_00090">
    <property type="entry name" value="PIMT"/>
    <property type="match status" value="1"/>
</dbReference>
<dbReference type="InterPro" id="IPR000682">
    <property type="entry name" value="PCMT"/>
</dbReference>
<dbReference type="InterPro" id="IPR029063">
    <property type="entry name" value="SAM-dependent_MTases_sf"/>
</dbReference>
<dbReference type="NCBIfam" id="TIGR00080">
    <property type="entry name" value="pimt"/>
    <property type="match status" value="1"/>
</dbReference>
<dbReference type="NCBIfam" id="NF001453">
    <property type="entry name" value="PRK00312.1"/>
    <property type="match status" value="1"/>
</dbReference>
<dbReference type="PANTHER" id="PTHR11579">
    <property type="entry name" value="PROTEIN-L-ISOASPARTATE O-METHYLTRANSFERASE"/>
    <property type="match status" value="1"/>
</dbReference>
<dbReference type="PANTHER" id="PTHR11579:SF0">
    <property type="entry name" value="PROTEIN-L-ISOASPARTATE(D-ASPARTATE) O-METHYLTRANSFERASE"/>
    <property type="match status" value="1"/>
</dbReference>
<dbReference type="Pfam" id="PF01135">
    <property type="entry name" value="PCMT"/>
    <property type="match status" value="1"/>
</dbReference>
<dbReference type="SUPFAM" id="SSF53335">
    <property type="entry name" value="S-adenosyl-L-methionine-dependent methyltransferases"/>
    <property type="match status" value="1"/>
</dbReference>
<dbReference type="PROSITE" id="PS01279">
    <property type="entry name" value="PCMT"/>
    <property type="match status" value="1"/>
</dbReference>
<evidence type="ECO:0000255" key="1">
    <source>
        <dbReference type="HAMAP-Rule" id="MF_00090"/>
    </source>
</evidence>
<comment type="function">
    <text evidence="1">Catalyzes the methyl esterification of L-isoaspartyl residues in peptides and proteins that result from spontaneous decomposition of normal L-aspartyl and L-asparaginyl residues. It plays a role in the repair and/or degradation of damaged proteins.</text>
</comment>
<comment type="catalytic activity">
    <reaction evidence="1">
        <text>[protein]-L-isoaspartate + S-adenosyl-L-methionine = [protein]-L-isoaspartate alpha-methyl ester + S-adenosyl-L-homocysteine</text>
        <dbReference type="Rhea" id="RHEA:12705"/>
        <dbReference type="Rhea" id="RHEA-COMP:12143"/>
        <dbReference type="Rhea" id="RHEA-COMP:12144"/>
        <dbReference type="ChEBI" id="CHEBI:57856"/>
        <dbReference type="ChEBI" id="CHEBI:59789"/>
        <dbReference type="ChEBI" id="CHEBI:90596"/>
        <dbReference type="ChEBI" id="CHEBI:90598"/>
        <dbReference type="EC" id="2.1.1.77"/>
    </reaction>
</comment>
<comment type="subcellular location">
    <subcellularLocation>
        <location evidence="1">Cytoplasm</location>
    </subcellularLocation>
</comment>
<comment type="similarity">
    <text evidence="1">Belongs to the methyltransferase superfamily. L-isoaspartyl/D-aspartyl protein methyltransferase family.</text>
</comment>
<feature type="chain" id="PRO_0000351849" description="Protein-L-isoaspartate O-methyltransferase">
    <location>
        <begin position="1"/>
        <end position="221"/>
    </location>
</feature>
<feature type="active site" evidence="1">
    <location>
        <position position="64"/>
    </location>
</feature>
<organism>
    <name type="scientific">Cytophaga hutchinsonii (strain ATCC 33406 / DSM 1761 / CIP 103989 / NBRC 15051 / NCIMB 9469 / D465)</name>
    <dbReference type="NCBI Taxonomy" id="269798"/>
    <lineage>
        <taxon>Bacteria</taxon>
        <taxon>Pseudomonadati</taxon>
        <taxon>Bacteroidota</taxon>
        <taxon>Cytophagia</taxon>
        <taxon>Cytophagales</taxon>
        <taxon>Cytophagaceae</taxon>
        <taxon>Cytophaga</taxon>
    </lineage>
</organism>
<accession>Q11TS0</accession>
<proteinExistence type="inferred from homology"/>
<keyword id="KW-0963">Cytoplasm</keyword>
<keyword id="KW-0489">Methyltransferase</keyword>
<keyword id="KW-1185">Reference proteome</keyword>
<keyword id="KW-0949">S-adenosyl-L-methionine</keyword>
<keyword id="KW-0808">Transferase</keyword>
<gene>
    <name evidence="1" type="primary">pcm</name>
    <name type="ordered locus">CHU_1928</name>
</gene>